<reference key="1">
    <citation type="journal article" date="2003" name="Nature">
        <title>The genome sequence of the filamentous fungus Neurospora crassa.</title>
        <authorList>
            <person name="Galagan J.E."/>
            <person name="Calvo S.E."/>
            <person name="Borkovich K.A."/>
            <person name="Selker E.U."/>
            <person name="Read N.D."/>
            <person name="Jaffe D.B."/>
            <person name="FitzHugh W."/>
            <person name="Ma L.-J."/>
            <person name="Smirnov S."/>
            <person name="Purcell S."/>
            <person name="Rehman B."/>
            <person name="Elkins T."/>
            <person name="Engels R."/>
            <person name="Wang S."/>
            <person name="Nielsen C.B."/>
            <person name="Butler J."/>
            <person name="Endrizzi M."/>
            <person name="Qui D."/>
            <person name="Ianakiev P."/>
            <person name="Bell-Pedersen D."/>
            <person name="Nelson M.A."/>
            <person name="Werner-Washburne M."/>
            <person name="Selitrennikoff C.P."/>
            <person name="Kinsey J.A."/>
            <person name="Braun E.L."/>
            <person name="Zelter A."/>
            <person name="Schulte U."/>
            <person name="Kothe G.O."/>
            <person name="Jedd G."/>
            <person name="Mewes H.-W."/>
            <person name="Staben C."/>
            <person name="Marcotte E."/>
            <person name="Greenberg D."/>
            <person name="Roy A."/>
            <person name="Foley K."/>
            <person name="Naylor J."/>
            <person name="Stange-Thomann N."/>
            <person name="Barrett R."/>
            <person name="Gnerre S."/>
            <person name="Kamal M."/>
            <person name="Kamvysselis M."/>
            <person name="Mauceli E.W."/>
            <person name="Bielke C."/>
            <person name="Rudd S."/>
            <person name="Frishman D."/>
            <person name="Krystofova S."/>
            <person name="Rasmussen C."/>
            <person name="Metzenberg R.L."/>
            <person name="Perkins D.D."/>
            <person name="Kroken S."/>
            <person name="Cogoni C."/>
            <person name="Macino G."/>
            <person name="Catcheside D.E.A."/>
            <person name="Li W."/>
            <person name="Pratt R.J."/>
            <person name="Osmani S.A."/>
            <person name="DeSouza C.P.C."/>
            <person name="Glass N.L."/>
            <person name="Orbach M.J."/>
            <person name="Berglund J.A."/>
            <person name="Voelker R."/>
            <person name="Yarden O."/>
            <person name="Plamann M."/>
            <person name="Seiler S."/>
            <person name="Dunlap J.C."/>
            <person name="Radford A."/>
            <person name="Aramayo R."/>
            <person name="Natvig D.O."/>
            <person name="Alex L.A."/>
            <person name="Mannhaupt G."/>
            <person name="Ebbole D.J."/>
            <person name="Freitag M."/>
            <person name="Paulsen I."/>
            <person name="Sachs M.S."/>
            <person name="Lander E.S."/>
            <person name="Nusbaum C."/>
            <person name="Birren B.W."/>
        </authorList>
    </citation>
    <scope>NUCLEOTIDE SEQUENCE [LARGE SCALE GENOMIC DNA]</scope>
    <source>
        <strain>ATCC 24698 / 74-OR23-1A / CBS 708.71 / DSM 1257 / FGSC 987</strain>
    </source>
</reference>
<reference key="2">
    <citation type="journal article" date="2006" name="FEMS Microbiol. Lett.">
        <title>Identification and comparative analysis of the large subunit mitochondrial ribosomal proteins of Neurospora crassa.</title>
        <authorList>
            <person name="Gan X."/>
            <person name="Arita K."/>
            <person name="Isono S."/>
            <person name="Kitakawa M."/>
            <person name="Yoshino K."/>
            <person name="Yonezawa K."/>
            <person name="Kato A."/>
            <person name="Inoue H."/>
            <person name="Isono K."/>
        </authorList>
    </citation>
    <scope>IDENTIFICATION IN THE MITOCHONDRIAL RIBOSOMAL LARGE COMPLEX</scope>
    <scope>IDENTIFICATION BY MASS SPECTROMETRY</scope>
</reference>
<reference evidence="6 7" key="3">
    <citation type="journal article" date="2020" name="Nat. Commun.">
        <title>Analysis of translating mitoribosome reveals functional characteristics of translation in mitochondria of fungi.</title>
        <authorList>
            <person name="Itoh Y."/>
            <person name="Naschberger A."/>
            <person name="Mortezaei N."/>
            <person name="Herrmann J.M."/>
            <person name="Amunts A."/>
        </authorList>
    </citation>
    <scope>STRUCTURE BY ELECTRON MICROSCOPY (2.74 ANGSTROMS)</scope>
</reference>
<accession>Q7S300</accession>
<gene>
    <name type="primary">mrpl51</name>
    <name type="ORF">NCU07549</name>
</gene>
<name>RM51_NEUCR</name>
<keyword id="KW-0002">3D-structure</keyword>
<keyword id="KW-0496">Mitochondrion</keyword>
<keyword id="KW-1185">Reference proteome</keyword>
<keyword id="KW-0687">Ribonucleoprotein</keyword>
<keyword id="KW-0689">Ribosomal protein</keyword>
<comment type="function">
    <text evidence="5">Component of the mitochondrial ribosome (mitoribosome), a dedicated translation machinery responsible for the synthesis of mitochondrial genome-encoded proteins, including at least some of the essential transmembrane subunits of the mitochondrial respiratory chain. The mitoribosomes are attached to the mitochondrial inner membrane and translation products are cotranslationally integrated into the membrane.</text>
</comment>
<comment type="subunit">
    <text evidence="1 2">Component of the mitochondrial large ribosomal subunit (mt-LSU). Mature N.crassa 74S mitochondrial ribosomes consist of a small (37S) and a large (54S) subunit. The 37S small subunit contains a 16S ribosomal RNA (16S mt-rRNA) and 32 different proteins. The 54S large subunit contains a 23S rRNA (23S mt-rRNA) and 42 different proteins.</text>
</comment>
<comment type="subcellular location">
    <subcellularLocation>
        <location evidence="1 2">Mitochondrion</location>
    </subcellularLocation>
</comment>
<comment type="similarity">
    <text evidence="4">Belongs to the mitochondrion-specific ribosomal protein mL43 family.</text>
</comment>
<feature type="chain" id="PRO_0000458601" description="Large ribosomal subunit protein mL43">
    <location>
        <begin position="1"/>
        <end position="138"/>
    </location>
</feature>
<dbReference type="EMBL" id="CM002238">
    <property type="protein sequence ID" value="EAA29826.1"/>
    <property type="molecule type" value="Genomic_DNA"/>
</dbReference>
<dbReference type="RefSeq" id="XP_959062.1">
    <property type="nucleotide sequence ID" value="XM_953969.2"/>
</dbReference>
<dbReference type="PDB" id="6YWS">
    <property type="method" value="EM"/>
    <property type="resolution" value="2.74 A"/>
    <property type="chains" value="4=1-138"/>
</dbReference>
<dbReference type="PDB" id="6YWV">
    <property type="method" value="EM"/>
    <property type="resolution" value="3.03 A"/>
    <property type="chains" value="4=1-138"/>
</dbReference>
<dbReference type="PDB" id="6YWX">
    <property type="method" value="EM"/>
    <property type="resolution" value="3.10 A"/>
    <property type="chains" value="4=1-138"/>
</dbReference>
<dbReference type="PDBsum" id="6YWS"/>
<dbReference type="PDBsum" id="6YWV"/>
<dbReference type="PDBsum" id="6YWX"/>
<dbReference type="EMDB" id="EMD-10973"/>
<dbReference type="EMDB" id="EMD-10977"/>
<dbReference type="EMDB" id="EMD-10978"/>
<dbReference type="SMR" id="Q7S300"/>
<dbReference type="FunCoup" id="Q7S300">
    <property type="interactions" value="327"/>
</dbReference>
<dbReference type="STRING" id="367110.Q7S300"/>
<dbReference type="PaxDb" id="5141-EFNCRP00000007847"/>
<dbReference type="EnsemblFungi" id="EAA29826">
    <property type="protein sequence ID" value="EAA29826"/>
    <property type="gene ID" value="NCU07549"/>
</dbReference>
<dbReference type="GeneID" id="3875200"/>
<dbReference type="KEGG" id="ncr:NCU07549"/>
<dbReference type="VEuPathDB" id="FungiDB:NCU07549"/>
<dbReference type="HOGENOM" id="CLU_117700_1_1_1"/>
<dbReference type="InParanoid" id="Q7S300"/>
<dbReference type="OMA" id="ISKWIDL"/>
<dbReference type="OrthoDB" id="88at2759"/>
<dbReference type="Proteomes" id="UP000001805">
    <property type="component" value="Chromosome 3, Linkage Group III"/>
</dbReference>
<dbReference type="GO" id="GO:0005762">
    <property type="term" value="C:mitochondrial large ribosomal subunit"/>
    <property type="evidence" value="ECO:0000318"/>
    <property type="project" value="GO_Central"/>
</dbReference>
<dbReference type="GO" id="GO:0003735">
    <property type="term" value="F:structural constituent of ribosome"/>
    <property type="evidence" value="ECO:0000318"/>
    <property type="project" value="GO_Central"/>
</dbReference>
<dbReference type="GO" id="GO:0032543">
    <property type="term" value="P:mitochondrial translation"/>
    <property type="evidence" value="ECO:0007669"/>
    <property type="project" value="InterPro"/>
</dbReference>
<dbReference type="FunFam" id="3.40.30.10:FF:000173">
    <property type="entry name" value="Mitochondrial 54S ribosomal protein"/>
    <property type="match status" value="1"/>
</dbReference>
<dbReference type="Gene3D" id="3.40.30.10">
    <property type="entry name" value="Glutaredoxin"/>
    <property type="match status" value="1"/>
</dbReference>
<dbReference type="InterPro" id="IPR039927">
    <property type="entry name" value="Ribosomal_mL43"/>
</dbReference>
<dbReference type="InterPro" id="IPR007741">
    <property type="entry name" value="Ribosomal_mL43/mS25/NADH_DH"/>
</dbReference>
<dbReference type="InterPro" id="IPR036249">
    <property type="entry name" value="Thioredoxin-like_sf"/>
</dbReference>
<dbReference type="PANTHER" id="PTHR21396">
    <property type="entry name" value="39S RIBOSOMAL PROTEIN L43"/>
    <property type="match status" value="1"/>
</dbReference>
<dbReference type="PANTHER" id="PTHR21396:SF2">
    <property type="entry name" value="LARGE RIBOSOMAL SUBUNIT PROTEIN ML43"/>
    <property type="match status" value="1"/>
</dbReference>
<dbReference type="Pfam" id="PF05047">
    <property type="entry name" value="L51_S25_CI-B8"/>
    <property type="match status" value="1"/>
</dbReference>
<dbReference type="SMART" id="SM00916">
    <property type="entry name" value="L51_S25_CI-B8"/>
    <property type="match status" value="1"/>
</dbReference>
<dbReference type="SUPFAM" id="SSF52833">
    <property type="entry name" value="Thioredoxin-like"/>
    <property type="match status" value="1"/>
</dbReference>
<sequence>MTVKALTQISSAGRNGVGAFVLQCKKLDIHYSDWAGSSRGMNGFIKSLLPKFAAANPQIEFVVSPRPAKHPILMGHYINGRTKAICVRNMEPLEILKKAELLRDASGEKPQKFKKPVTSTNPSVRGVWSPYHGQGMAV</sequence>
<evidence type="ECO:0000269" key="1">
    <source>
    </source>
</evidence>
<evidence type="ECO:0000269" key="2">
    <source>
    </source>
</evidence>
<evidence type="ECO:0000303" key="3">
    <source>
    </source>
</evidence>
<evidence type="ECO:0000305" key="4"/>
<evidence type="ECO:0000305" key="5">
    <source>
    </source>
</evidence>
<evidence type="ECO:0007744" key="6">
    <source>
        <dbReference type="PDB" id="6YWS"/>
    </source>
</evidence>
<evidence type="ECO:0007744" key="7">
    <source>
        <dbReference type="PDB" id="6YWV"/>
    </source>
</evidence>
<proteinExistence type="evidence at protein level"/>
<organism>
    <name type="scientific">Neurospora crassa (strain ATCC 24698 / 74-OR23-1A / CBS 708.71 / DSM 1257 / FGSC 987)</name>
    <dbReference type="NCBI Taxonomy" id="367110"/>
    <lineage>
        <taxon>Eukaryota</taxon>
        <taxon>Fungi</taxon>
        <taxon>Dikarya</taxon>
        <taxon>Ascomycota</taxon>
        <taxon>Pezizomycotina</taxon>
        <taxon>Sordariomycetes</taxon>
        <taxon>Sordariomycetidae</taxon>
        <taxon>Sordariales</taxon>
        <taxon>Sordariaceae</taxon>
        <taxon>Neurospora</taxon>
    </lineage>
</organism>
<protein>
    <recommendedName>
        <fullName evidence="3">Large ribosomal subunit protein mL43</fullName>
    </recommendedName>
</protein>